<dbReference type="EMBL" id="AF330045">
    <property type="protein sequence ID" value="AAL37480.1"/>
    <property type="molecule type" value="mRNA"/>
</dbReference>
<dbReference type="EMBL" id="AL137121">
    <property type="status" value="NOT_ANNOTATED_CDS"/>
    <property type="molecule type" value="Genomic_DNA"/>
</dbReference>
<dbReference type="EMBL" id="AL137244">
    <property type="status" value="NOT_ANNOTATED_CDS"/>
    <property type="molecule type" value="Genomic_DNA"/>
</dbReference>
<dbReference type="EMBL" id="AL137782">
    <property type="status" value="NOT_ANNOTATED_CDS"/>
    <property type="molecule type" value="Genomic_DNA"/>
</dbReference>
<dbReference type="EMBL" id="AL359392">
    <property type="status" value="NOT_ANNOTATED_CDS"/>
    <property type="molecule type" value="Genomic_DNA"/>
</dbReference>
<dbReference type="EMBL" id="AB020665">
    <property type="protein sequence ID" value="BAA74881.2"/>
    <property type="molecule type" value="mRNA"/>
</dbReference>
<dbReference type="EMBL" id="AF174600">
    <property type="protein sequence ID" value="AAF04521.1"/>
    <property type="molecule type" value="mRNA"/>
</dbReference>
<dbReference type="EMBL" id="AF144237">
    <property type="protein sequence ID" value="AAD33924.1"/>
    <property type="status" value="ALT_SEQ"/>
    <property type="molecule type" value="mRNA"/>
</dbReference>
<dbReference type="EMBL" id="U90654">
    <property type="protein sequence ID" value="AAB86592.1"/>
    <property type="molecule type" value="mRNA"/>
</dbReference>
<dbReference type="EMBL" id="AF092557">
    <property type="protein sequence ID" value="AAC96299.1"/>
    <property type="status" value="ALT_INIT"/>
    <property type="molecule type" value="Genomic_DNA"/>
</dbReference>
<dbReference type="EMBL" id="AF092554">
    <property type="protein sequence ID" value="AAC96299.1"/>
    <property type="status" value="JOINED"/>
    <property type="molecule type" value="Genomic_DNA"/>
</dbReference>
<dbReference type="EMBL" id="AF092555">
    <property type="protein sequence ID" value="AAC96299.1"/>
    <property type="status" value="JOINED"/>
    <property type="molecule type" value="Genomic_DNA"/>
</dbReference>
<dbReference type="EMBL" id="AF092556">
    <property type="protein sequence ID" value="AAC96299.1"/>
    <property type="status" value="JOINED"/>
    <property type="molecule type" value="Genomic_DNA"/>
</dbReference>
<dbReference type="EMBL" id="AF092557">
    <property type="protein sequence ID" value="AAC96300.1"/>
    <property type="status" value="ALT_INIT"/>
    <property type="molecule type" value="Genomic_DNA"/>
</dbReference>
<dbReference type="EMBL" id="AF092554">
    <property type="protein sequence ID" value="AAC96300.1"/>
    <property type="status" value="JOINED"/>
    <property type="molecule type" value="Genomic_DNA"/>
</dbReference>
<dbReference type="CCDS" id="CCDS53876.1">
    <molecule id="Q8WWI1-5"/>
</dbReference>
<dbReference type="CCDS" id="CCDS9454.1">
    <molecule id="Q8WWI1-3"/>
</dbReference>
<dbReference type="PIR" id="JE0325">
    <property type="entry name" value="JE0325"/>
</dbReference>
<dbReference type="RefSeq" id="NP_001293009.1">
    <property type="nucleotide sequence ID" value="NM_001306080.1"/>
</dbReference>
<dbReference type="RefSeq" id="NP_001317512.1">
    <property type="nucleotide sequence ID" value="NM_001330583.1"/>
</dbReference>
<dbReference type="RefSeq" id="NP_005349.3">
    <molecule id="Q8WWI1-3"/>
    <property type="nucleotide sequence ID" value="NM_005358.5"/>
</dbReference>
<dbReference type="RefSeq" id="NP_056667.2">
    <property type="nucleotide sequence ID" value="NM_015842.2"/>
</dbReference>
<dbReference type="PDB" id="2EAQ">
    <property type="method" value="X-ray"/>
    <property type="resolution" value="1.46 A"/>
    <property type="chains" value="A=1037-1126"/>
</dbReference>
<dbReference type="PDBsum" id="2EAQ"/>
<dbReference type="SMR" id="Q8WWI1"/>
<dbReference type="BioGRID" id="110193">
    <property type="interactions" value="209"/>
</dbReference>
<dbReference type="ComplexPortal" id="CPX-7929">
    <property type="entry name" value="SCF E3 ubiquitin ligase complex, LMO7 variant"/>
</dbReference>
<dbReference type="CORUM" id="Q8WWI1"/>
<dbReference type="DIP" id="DIP-33107N"/>
<dbReference type="FunCoup" id="Q8WWI1">
    <property type="interactions" value="973"/>
</dbReference>
<dbReference type="IntAct" id="Q8WWI1">
    <property type="interactions" value="75"/>
</dbReference>
<dbReference type="MINT" id="Q8WWI1"/>
<dbReference type="STRING" id="9606.ENSP00000366757"/>
<dbReference type="GlyCosmos" id="Q8WWI1">
    <property type="glycosylation" value="11 sites, 2 glycans"/>
</dbReference>
<dbReference type="GlyGen" id="Q8WWI1">
    <property type="glycosylation" value="28 sites, 1 N-linked glycan (1 site), 2 O-linked glycans (27 sites)"/>
</dbReference>
<dbReference type="iPTMnet" id="Q8WWI1"/>
<dbReference type="MetOSite" id="Q8WWI1"/>
<dbReference type="PhosphoSitePlus" id="Q8WWI1"/>
<dbReference type="SwissPalm" id="Q8WWI1"/>
<dbReference type="BioMuta" id="LMO7"/>
<dbReference type="DMDM" id="308153585"/>
<dbReference type="jPOST" id="Q8WWI1"/>
<dbReference type="MassIVE" id="Q8WWI1"/>
<dbReference type="PaxDb" id="9606-ENSP00000433352"/>
<dbReference type="PeptideAtlas" id="Q8WWI1"/>
<dbReference type="ProteomicsDB" id="21797"/>
<dbReference type="ProteomicsDB" id="74888">
    <molecule id="Q8WWI1-1"/>
</dbReference>
<dbReference type="ProteomicsDB" id="74889">
    <molecule id="Q8WWI1-2"/>
</dbReference>
<dbReference type="ProteomicsDB" id="74890">
    <molecule id="Q8WWI1-3"/>
</dbReference>
<dbReference type="ProteomicsDB" id="74891">
    <molecule id="Q8WWI1-4"/>
</dbReference>
<dbReference type="Pumba" id="Q8WWI1"/>
<dbReference type="Antibodypedia" id="10122">
    <property type="antibodies" value="112 antibodies from 27 providers"/>
</dbReference>
<dbReference type="DNASU" id="4008"/>
<dbReference type="Ensembl" id="ENST00000341547.8">
    <molecule id="Q8WWI1-3"/>
    <property type="protein sequence ID" value="ENSP00000342112.4"/>
    <property type="gene ID" value="ENSG00000136153.21"/>
</dbReference>
<dbReference type="GeneID" id="4008"/>
<dbReference type="KEGG" id="hsa:4008"/>
<dbReference type="UCSC" id="uc010thv.4">
    <molecule id="Q8WWI1-1"/>
    <property type="organism name" value="human"/>
</dbReference>
<dbReference type="AGR" id="HGNC:6646"/>
<dbReference type="CTD" id="4008"/>
<dbReference type="DisGeNET" id="4008"/>
<dbReference type="GeneCards" id="LMO7"/>
<dbReference type="HGNC" id="HGNC:6646">
    <property type="gene designation" value="LMO7"/>
</dbReference>
<dbReference type="HPA" id="ENSG00000136153">
    <property type="expression patterns" value="Tissue enhanced (heart)"/>
</dbReference>
<dbReference type="MalaCards" id="LMO7"/>
<dbReference type="MIM" id="604362">
    <property type="type" value="gene"/>
</dbReference>
<dbReference type="neXtProt" id="NX_Q8WWI1"/>
<dbReference type="OpenTargets" id="ENSG00000136153"/>
<dbReference type="PharmGKB" id="PA30412"/>
<dbReference type="VEuPathDB" id="HostDB:ENSG00000136153"/>
<dbReference type="eggNOG" id="KOG1704">
    <property type="taxonomic scope" value="Eukaryota"/>
</dbReference>
<dbReference type="GeneTree" id="ENSGT00950000183159"/>
<dbReference type="InParanoid" id="Q8WWI1"/>
<dbReference type="OrthoDB" id="15627at2759"/>
<dbReference type="PAN-GO" id="Q8WWI1">
    <property type="GO annotations" value="0 GO annotations based on evolutionary models"/>
</dbReference>
<dbReference type="PhylomeDB" id="Q8WWI1"/>
<dbReference type="TreeFam" id="TF332155"/>
<dbReference type="PathwayCommons" id="Q8WWI1"/>
<dbReference type="Reactome" id="R-HSA-8951664">
    <property type="pathway name" value="Neddylation"/>
</dbReference>
<dbReference type="Reactome" id="R-HSA-9725370">
    <property type="pathway name" value="Signaling by ALK fusions and activated point mutants"/>
</dbReference>
<dbReference type="Reactome" id="R-HSA-983168">
    <property type="pathway name" value="Antigen processing: Ubiquitination &amp; Proteasome degradation"/>
</dbReference>
<dbReference type="SignaLink" id="Q8WWI1"/>
<dbReference type="BioGRID-ORCS" id="4008">
    <property type="hits" value="16 hits in 1196 CRISPR screens"/>
</dbReference>
<dbReference type="CD-CODE" id="FB4E32DD">
    <property type="entry name" value="Presynaptic clusters and postsynaptic densities"/>
</dbReference>
<dbReference type="ChiTaRS" id="LMO7">
    <property type="organism name" value="human"/>
</dbReference>
<dbReference type="EvolutionaryTrace" id="Q8WWI1"/>
<dbReference type="GeneWiki" id="LMO7"/>
<dbReference type="GenomeRNAi" id="4008"/>
<dbReference type="Pharos" id="Q8WWI1">
    <property type="development level" value="Tbio"/>
</dbReference>
<dbReference type="PRO" id="PR:Q8WWI1"/>
<dbReference type="Proteomes" id="UP000005640">
    <property type="component" value="Chromosome 13"/>
</dbReference>
<dbReference type="RNAct" id="Q8WWI1">
    <property type="molecule type" value="protein"/>
</dbReference>
<dbReference type="Bgee" id="ENSG00000136153">
    <property type="expression patterns" value="Expressed in sural nerve and 132 other cell types or tissues"/>
</dbReference>
<dbReference type="ExpressionAtlas" id="Q8WWI1">
    <property type="expression patterns" value="baseline and differential"/>
</dbReference>
<dbReference type="GO" id="GO:0016324">
    <property type="term" value="C:apical plasma membrane"/>
    <property type="evidence" value="ECO:0000250"/>
    <property type="project" value="UniProtKB"/>
</dbReference>
<dbReference type="GO" id="GO:0009986">
    <property type="term" value="C:cell surface"/>
    <property type="evidence" value="ECO:0000314"/>
    <property type="project" value="UniProtKB"/>
</dbReference>
<dbReference type="GO" id="GO:0005737">
    <property type="term" value="C:cytoplasm"/>
    <property type="evidence" value="ECO:0000314"/>
    <property type="project" value="UniProtKB"/>
</dbReference>
<dbReference type="GO" id="GO:0005829">
    <property type="term" value="C:cytosol"/>
    <property type="evidence" value="ECO:0000304"/>
    <property type="project" value="Reactome"/>
</dbReference>
<dbReference type="GO" id="GO:0005925">
    <property type="term" value="C:focal adhesion"/>
    <property type="evidence" value="ECO:0007005"/>
    <property type="project" value="UniProtKB"/>
</dbReference>
<dbReference type="GO" id="GO:0005739">
    <property type="term" value="C:mitochondrion"/>
    <property type="evidence" value="ECO:0006056"/>
    <property type="project" value="FlyBase"/>
</dbReference>
<dbReference type="GO" id="GO:0005635">
    <property type="term" value="C:nuclear envelope"/>
    <property type="evidence" value="ECO:0000314"/>
    <property type="project" value="UniProtKB"/>
</dbReference>
<dbReference type="GO" id="GO:0005634">
    <property type="term" value="C:nucleus"/>
    <property type="evidence" value="ECO:0000314"/>
    <property type="project" value="UniProtKB"/>
</dbReference>
<dbReference type="GO" id="GO:0000151">
    <property type="term" value="C:ubiquitin ligase complex"/>
    <property type="evidence" value="ECO:0000303"/>
    <property type="project" value="UniProtKB"/>
</dbReference>
<dbReference type="GO" id="GO:0046872">
    <property type="term" value="F:metal ion binding"/>
    <property type="evidence" value="ECO:0007669"/>
    <property type="project" value="UniProtKB-KW"/>
</dbReference>
<dbReference type="GO" id="GO:0004842">
    <property type="term" value="F:ubiquitin-protein transferase activity"/>
    <property type="evidence" value="ECO:0000303"/>
    <property type="project" value="UniProtKB"/>
</dbReference>
<dbReference type="GO" id="GO:0045944">
    <property type="term" value="P:positive regulation of transcription by RNA polymerase II"/>
    <property type="evidence" value="ECO:0000314"/>
    <property type="project" value="UniProtKB"/>
</dbReference>
<dbReference type="GO" id="GO:0016567">
    <property type="term" value="P:protein ubiquitination"/>
    <property type="evidence" value="ECO:0000303"/>
    <property type="project" value="UniProtKB"/>
</dbReference>
<dbReference type="GO" id="GO:0030155">
    <property type="term" value="P:regulation of cell adhesion"/>
    <property type="evidence" value="ECO:0007669"/>
    <property type="project" value="InterPro"/>
</dbReference>
<dbReference type="GO" id="GO:0023051">
    <property type="term" value="P:regulation of signaling"/>
    <property type="evidence" value="ECO:0007669"/>
    <property type="project" value="InterPro"/>
</dbReference>
<dbReference type="CDD" id="cd08368">
    <property type="entry name" value="LIM"/>
    <property type="match status" value="1"/>
</dbReference>
<dbReference type="FunFam" id="2.10.110.10:FF:000041">
    <property type="entry name" value="LIM and calponin homology domains 1"/>
    <property type="match status" value="1"/>
</dbReference>
<dbReference type="FunFam" id="1.10.418.10:FF:000038">
    <property type="entry name" value="LIM and calponin homology domains-containing protein 1"/>
    <property type="match status" value="1"/>
</dbReference>
<dbReference type="FunFam" id="2.30.42.10:FF:000135">
    <property type="entry name" value="LIM domain only 7"/>
    <property type="match status" value="1"/>
</dbReference>
<dbReference type="Gene3D" id="2.30.42.10">
    <property type="match status" value="1"/>
</dbReference>
<dbReference type="Gene3D" id="1.10.418.10">
    <property type="entry name" value="Calponin-like domain"/>
    <property type="match status" value="1"/>
</dbReference>
<dbReference type="Gene3D" id="2.10.110.10">
    <property type="entry name" value="Cysteine Rich Protein"/>
    <property type="match status" value="1"/>
</dbReference>
<dbReference type="InterPro" id="IPR001715">
    <property type="entry name" value="CH_dom"/>
</dbReference>
<dbReference type="InterPro" id="IPR036872">
    <property type="entry name" value="CH_dom_sf"/>
</dbReference>
<dbReference type="InterPro" id="IPR031865">
    <property type="entry name" value="DUF4757"/>
</dbReference>
<dbReference type="InterPro" id="IPR029978">
    <property type="entry name" value="LMO-7"/>
</dbReference>
<dbReference type="InterPro" id="IPR001478">
    <property type="entry name" value="PDZ"/>
</dbReference>
<dbReference type="InterPro" id="IPR036034">
    <property type="entry name" value="PDZ_sf"/>
</dbReference>
<dbReference type="InterPro" id="IPR003096">
    <property type="entry name" value="SM22_calponin"/>
</dbReference>
<dbReference type="InterPro" id="IPR001781">
    <property type="entry name" value="Znf_LIM"/>
</dbReference>
<dbReference type="PANTHER" id="PTHR46767">
    <property type="entry name" value="LIM DOMAIN ONLY PROTEIN 7"/>
    <property type="match status" value="1"/>
</dbReference>
<dbReference type="PANTHER" id="PTHR46767:SF1">
    <property type="entry name" value="LIM DOMAIN ONLY PROTEIN 7"/>
    <property type="match status" value="1"/>
</dbReference>
<dbReference type="Pfam" id="PF00307">
    <property type="entry name" value="CH"/>
    <property type="match status" value="1"/>
</dbReference>
<dbReference type="Pfam" id="PF15949">
    <property type="entry name" value="DUF4757"/>
    <property type="match status" value="2"/>
</dbReference>
<dbReference type="Pfam" id="PF00412">
    <property type="entry name" value="LIM"/>
    <property type="match status" value="1"/>
</dbReference>
<dbReference type="Pfam" id="PF00595">
    <property type="entry name" value="PDZ"/>
    <property type="match status" value="1"/>
</dbReference>
<dbReference type="PRINTS" id="PR00888">
    <property type="entry name" value="SM22CALPONIN"/>
</dbReference>
<dbReference type="SMART" id="SM00033">
    <property type="entry name" value="CH"/>
    <property type="match status" value="1"/>
</dbReference>
<dbReference type="SMART" id="SM00132">
    <property type="entry name" value="LIM"/>
    <property type="match status" value="1"/>
</dbReference>
<dbReference type="SMART" id="SM00228">
    <property type="entry name" value="PDZ"/>
    <property type="match status" value="1"/>
</dbReference>
<dbReference type="SUPFAM" id="SSF47576">
    <property type="entry name" value="Calponin-homology domain, CH-domain"/>
    <property type="match status" value="1"/>
</dbReference>
<dbReference type="SUPFAM" id="SSF50156">
    <property type="entry name" value="PDZ domain-like"/>
    <property type="match status" value="1"/>
</dbReference>
<dbReference type="PROSITE" id="PS50021">
    <property type="entry name" value="CH"/>
    <property type="match status" value="1"/>
</dbReference>
<dbReference type="PROSITE" id="PS00478">
    <property type="entry name" value="LIM_DOMAIN_1"/>
    <property type="match status" value="1"/>
</dbReference>
<dbReference type="PROSITE" id="PS50023">
    <property type="entry name" value="LIM_DOMAIN_2"/>
    <property type="match status" value="1"/>
</dbReference>
<dbReference type="PROSITE" id="PS50106">
    <property type="entry name" value="PDZ"/>
    <property type="match status" value="1"/>
</dbReference>
<accession>Q8WWI1</accession>
<accession>E9PLH4</accession>
<accession>O15462</accession>
<accession>O95346</accession>
<accession>Q5TBK6</accession>
<accession>Q9UKC1</accession>
<accession>Q9UQM5</accession>
<accession>Q9Y6A7</accession>
<evidence type="ECO:0000255" key="1">
    <source>
        <dbReference type="PROSITE-ProRule" id="PRU00044"/>
    </source>
</evidence>
<evidence type="ECO:0000255" key="2">
    <source>
        <dbReference type="PROSITE-ProRule" id="PRU00125"/>
    </source>
</evidence>
<evidence type="ECO:0000255" key="3">
    <source>
        <dbReference type="PROSITE-ProRule" id="PRU00143"/>
    </source>
</evidence>
<evidence type="ECO:0000256" key="4">
    <source>
        <dbReference type="SAM" id="MobiDB-lite"/>
    </source>
</evidence>
<evidence type="ECO:0000269" key="5">
    <source>
    </source>
</evidence>
<evidence type="ECO:0000269" key="6">
    <source>
    </source>
</evidence>
<evidence type="ECO:0000269" key="7">
    <source>
    </source>
</evidence>
<evidence type="ECO:0000303" key="8">
    <source>
    </source>
</evidence>
<evidence type="ECO:0000303" key="9">
    <source>
    </source>
</evidence>
<evidence type="ECO:0000303" key="10">
    <source>
    </source>
</evidence>
<evidence type="ECO:0000303" key="11">
    <source>
    </source>
</evidence>
<evidence type="ECO:0000303" key="12">
    <source ref="6"/>
</evidence>
<evidence type="ECO:0000305" key="13"/>
<evidence type="ECO:0007744" key="14">
    <source>
    </source>
</evidence>
<evidence type="ECO:0007744" key="15">
    <source>
    </source>
</evidence>
<evidence type="ECO:0007744" key="16">
    <source>
    </source>
</evidence>
<evidence type="ECO:0007744" key="17">
    <source>
    </source>
</evidence>
<evidence type="ECO:0007744" key="18">
    <source>
    </source>
</evidence>
<evidence type="ECO:0007744" key="19">
    <source>
    </source>
</evidence>
<evidence type="ECO:0007744" key="20">
    <source>
    </source>
</evidence>
<evidence type="ECO:0007744" key="21">
    <source>
    </source>
</evidence>
<evidence type="ECO:0007744" key="22">
    <source>
    </source>
</evidence>
<evidence type="ECO:0007744" key="23">
    <source>
    </source>
</evidence>
<evidence type="ECO:0007744" key="24">
    <source>
    </source>
</evidence>
<evidence type="ECO:0007829" key="25">
    <source>
        <dbReference type="PDB" id="2EAQ"/>
    </source>
</evidence>
<organism>
    <name type="scientific">Homo sapiens</name>
    <name type="common">Human</name>
    <dbReference type="NCBI Taxonomy" id="9606"/>
    <lineage>
        <taxon>Eukaryota</taxon>
        <taxon>Metazoa</taxon>
        <taxon>Chordata</taxon>
        <taxon>Craniata</taxon>
        <taxon>Vertebrata</taxon>
        <taxon>Euteleostomi</taxon>
        <taxon>Mammalia</taxon>
        <taxon>Eutheria</taxon>
        <taxon>Euarchontoglires</taxon>
        <taxon>Primates</taxon>
        <taxon>Haplorrhini</taxon>
        <taxon>Catarrhini</taxon>
        <taxon>Hominidae</taxon>
        <taxon>Homo</taxon>
    </lineage>
</organism>
<reference key="1">
    <citation type="journal article" date="2002" name="Hum. Genet.">
        <title>A genomic map of a 6-Mb region at 13q21-q22 implicated in cancer development: identification and characterization of candidate genes.</title>
        <authorList>
            <person name="Rozenblum E."/>
            <person name="Vahteristo P."/>
            <person name="Sandberg T."/>
            <person name="Bergthorsson J.T."/>
            <person name="Syrjakoski K."/>
            <person name="Weaver D."/>
            <person name="Haraldsson K."/>
            <person name="Johannsdottir H.K."/>
            <person name="Vehmanen P."/>
            <person name="Nigam S."/>
            <person name="Golberger N."/>
            <person name="Robbins C."/>
            <person name="Pak E."/>
            <person name="Dutra A."/>
            <person name="Gillander E."/>
            <person name="Stephan D.A."/>
            <person name="Bailey-Wilson J."/>
            <person name="Juo S.-H.H."/>
            <person name="Kainu T."/>
            <person name="Arason A."/>
            <person name="Barkardottir R.B."/>
            <person name="Nevanlinna H."/>
            <person name="Borg A."/>
            <person name="Kallioniemi O.-P."/>
        </authorList>
    </citation>
    <scope>NUCLEOTIDE SEQUENCE [MRNA] (ISOFORM 3)</scope>
    <scope>TISSUE SPECIFICITY</scope>
    <source>
        <tissue>Brain</tissue>
        <tissue>Peripheral blood leukocyte</tissue>
    </source>
</reference>
<reference key="2">
    <citation type="journal article" date="2004" name="Nature">
        <title>The DNA sequence and analysis of human chromosome 13.</title>
        <authorList>
            <person name="Dunham A."/>
            <person name="Matthews L.H."/>
            <person name="Burton J."/>
            <person name="Ashurst J.L."/>
            <person name="Howe K.L."/>
            <person name="Ashcroft K.J."/>
            <person name="Beare D.M."/>
            <person name="Burford D.C."/>
            <person name="Hunt S.E."/>
            <person name="Griffiths-Jones S."/>
            <person name="Jones M.C."/>
            <person name="Keenan S.J."/>
            <person name="Oliver K."/>
            <person name="Scott C.E."/>
            <person name="Ainscough R."/>
            <person name="Almeida J.P."/>
            <person name="Ambrose K.D."/>
            <person name="Andrews D.T."/>
            <person name="Ashwell R.I.S."/>
            <person name="Babbage A.K."/>
            <person name="Bagguley C.L."/>
            <person name="Bailey J."/>
            <person name="Bannerjee R."/>
            <person name="Barlow K.F."/>
            <person name="Bates K."/>
            <person name="Beasley H."/>
            <person name="Bird C.P."/>
            <person name="Bray-Allen S."/>
            <person name="Brown A.J."/>
            <person name="Brown J.Y."/>
            <person name="Burrill W."/>
            <person name="Carder C."/>
            <person name="Carter N.P."/>
            <person name="Chapman J.C."/>
            <person name="Clamp M.E."/>
            <person name="Clark S.Y."/>
            <person name="Clarke G."/>
            <person name="Clee C.M."/>
            <person name="Clegg S.C."/>
            <person name="Cobley V."/>
            <person name="Collins J.E."/>
            <person name="Corby N."/>
            <person name="Coville G.J."/>
            <person name="Deloukas P."/>
            <person name="Dhami P."/>
            <person name="Dunham I."/>
            <person name="Dunn M."/>
            <person name="Earthrowl M.E."/>
            <person name="Ellington A.G."/>
            <person name="Faulkner L."/>
            <person name="Frankish A.G."/>
            <person name="Frankland J."/>
            <person name="French L."/>
            <person name="Garner P."/>
            <person name="Garnett J."/>
            <person name="Gilbert J.G.R."/>
            <person name="Gilson C.J."/>
            <person name="Ghori J."/>
            <person name="Grafham D.V."/>
            <person name="Gribble S.M."/>
            <person name="Griffiths C."/>
            <person name="Hall R.E."/>
            <person name="Hammond S."/>
            <person name="Harley J.L."/>
            <person name="Hart E.A."/>
            <person name="Heath P.D."/>
            <person name="Howden P.J."/>
            <person name="Huckle E.J."/>
            <person name="Hunt P.J."/>
            <person name="Hunt A.R."/>
            <person name="Johnson C."/>
            <person name="Johnson D."/>
            <person name="Kay M."/>
            <person name="Kimberley A.M."/>
            <person name="King A."/>
            <person name="Laird G.K."/>
            <person name="Langford C.J."/>
            <person name="Lawlor S."/>
            <person name="Leongamornlert D.A."/>
            <person name="Lloyd D.M."/>
            <person name="Lloyd C."/>
            <person name="Loveland J.E."/>
            <person name="Lovell J."/>
            <person name="Martin S."/>
            <person name="Mashreghi-Mohammadi M."/>
            <person name="McLaren S.J."/>
            <person name="McMurray A."/>
            <person name="Milne S."/>
            <person name="Moore M.J.F."/>
            <person name="Nickerson T."/>
            <person name="Palmer S.A."/>
            <person name="Pearce A.V."/>
            <person name="Peck A.I."/>
            <person name="Pelan S."/>
            <person name="Phillimore B."/>
            <person name="Porter K.M."/>
            <person name="Rice C.M."/>
            <person name="Searle S."/>
            <person name="Sehra H.K."/>
            <person name="Shownkeen R."/>
            <person name="Skuce C.D."/>
            <person name="Smith M."/>
            <person name="Steward C.A."/>
            <person name="Sycamore N."/>
            <person name="Tester J."/>
            <person name="Thomas D.W."/>
            <person name="Tracey A."/>
            <person name="Tromans A."/>
            <person name="Tubby B."/>
            <person name="Wall M."/>
            <person name="Wallis J.M."/>
            <person name="West A.P."/>
            <person name="Whitehead S.L."/>
            <person name="Willey D.L."/>
            <person name="Wilming L."/>
            <person name="Wray P.W."/>
            <person name="Wright M.W."/>
            <person name="Young L."/>
            <person name="Coulson A."/>
            <person name="Durbin R.M."/>
            <person name="Hubbard T."/>
            <person name="Sulston J.E."/>
            <person name="Beck S."/>
            <person name="Bentley D.R."/>
            <person name="Rogers J."/>
            <person name="Ross M.T."/>
        </authorList>
    </citation>
    <scope>NUCLEOTIDE SEQUENCE [LARGE SCALE GENOMIC DNA]</scope>
</reference>
<reference key="3">
    <citation type="journal article" date="1998" name="DNA Res.">
        <title>Prediction of the coding sequences of unidentified human genes. XII. The complete sequences of 100 new cDNA clones from brain which code for large proteins in vitro.</title>
        <authorList>
            <person name="Nagase T."/>
            <person name="Ishikawa K."/>
            <person name="Suyama M."/>
            <person name="Kikuno R."/>
            <person name="Hirosawa M."/>
            <person name="Miyajima N."/>
            <person name="Tanaka A."/>
            <person name="Kotani H."/>
            <person name="Nomura N."/>
            <person name="Ohara O."/>
        </authorList>
    </citation>
    <scope>NUCLEOTIDE SEQUENCE [LARGE SCALE MRNA] (ISOFORM 5)</scope>
    <source>
        <tissue>Brain</tissue>
    </source>
</reference>
<reference key="4">
    <citation type="journal article" date="2002" name="DNA Res.">
        <title>Construction of expression-ready cDNA clones for KIAA genes: manual curation of 330 KIAA cDNA clones.</title>
        <authorList>
            <person name="Nakajima D."/>
            <person name="Okazaki N."/>
            <person name="Yamakawa H."/>
            <person name="Kikuno R."/>
            <person name="Ohara O."/>
            <person name="Nagase T."/>
        </authorList>
    </citation>
    <scope>SEQUENCE REVISION</scope>
</reference>
<reference key="5">
    <citation type="journal article" date="1999" name="Curr. Biol.">
        <title>Identification of a family of human F-box proteins.</title>
        <authorList>
            <person name="Cenciarelli C."/>
            <person name="Chiaur D.S."/>
            <person name="Guardavaccaro D."/>
            <person name="Parks W."/>
            <person name="Vidal M."/>
            <person name="Pagano M."/>
        </authorList>
    </citation>
    <scope>NUCLEOTIDE SEQUENCE [MRNA] OF 504-758 (ISOFORM 2)</scope>
</reference>
<reference key="6">
    <citation type="submission" date="1999-04" db="EMBL/GenBank/DDBJ databases">
        <title>LOMP, a novel protein that contains a single LIM domain and PDZ domain.</title>
        <authorList>
            <person name="Mu W."/>
            <person name="Burt D.R."/>
        </authorList>
    </citation>
    <scope>NUCLEOTIDE SEQUENCE [MRNA] OF 763-1683 (ISOFORM 2)</scope>
    <source>
        <tissue>Brain</tissue>
    </source>
</reference>
<reference key="7">
    <citation type="journal article" date="1998" name="Biochem. Biophys. Res. Commun.">
        <title>Analysis of a human cDNA containing a tissue-specific alternatively spliced LIM domain.</title>
        <authorList>
            <person name="Putilina T."/>
            <person name="Jaworski C."/>
            <person name="Gentleman S."/>
            <person name="McDonald B."/>
            <person name="Kadiri M."/>
            <person name="Wong P."/>
        </authorList>
    </citation>
    <scope>NUCLEOTIDE SEQUENCE [GENOMIC DNA / MRNA] OF 1343-1683 (ISOFORM 3)</scope>
    <scope>ALTERNATIVE SPLICING (ISOFORMS 2; 3 AND 4)</scope>
    <scope>TISSUE SPECIFICITY</scope>
    <source>
        <tissue>Pancreas</tissue>
    </source>
</reference>
<reference key="8">
    <citation type="journal article" date="2006" name="Cell">
        <title>Global, in vivo, and site-specific phosphorylation dynamics in signaling networks.</title>
        <authorList>
            <person name="Olsen J.V."/>
            <person name="Blagoev B."/>
            <person name="Gnad F."/>
            <person name="Macek B."/>
            <person name="Kumar C."/>
            <person name="Mortensen P."/>
            <person name="Mann M."/>
        </authorList>
    </citation>
    <scope>PHOSPHORYLATION [LARGE SCALE ANALYSIS] AT SER-246; SER-1026 AND SER-1510</scope>
    <scope>IDENTIFICATION BY MASS SPECTROMETRY [LARGE SCALE ANALYSIS]</scope>
    <source>
        <tissue>Cervix carcinoma</tissue>
    </source>
</reference>
<reference key="9">
    <citation type="journal article" date="2006" name="Nat. Biotechnol.">
        <title>A probability-based approach for high-throughput protein phosphorylation analysis and site localization.</title>
        <authorList>
            <person name="Beausoleil S.A."/>
            <person name="Villen J."/>
            <person name="Gerber S.A."/>
            <person name="Rush J."/>
            <person name="Gygi S.P."/>
        </authorList>
    </citation>
    <scope>PHOSPHORYLATION [LARGE SCALE ANALYSIS] AT SER-867; THR-949; THR-1048 AND SER-1586</scope>
    <scope>PHOSPHORYLATION [LARGE SCALE ANALYSIS] AT SER-342 (ISOFORM 3)</scope>
    <scope>IDENTIFICATION BY MASS SPECTROMETRY [LARGE SCALE ANALYSIS]</scope>
    <source>
        <tissue>Cervix carcinoma</tissue>
    </source>
</reference>
<reference key="10">
    <citation type="journal article" date="2007" name="J. Proteome Res.">
        <title>Improved titanium dioxide enrichment of phosphopeptides from HeLa cells and high confident phosphopeptide identification by cross-validation of MS/MS and MS/MS/MS spectra.</title>
        <authorList>
            <person name="Yu L.R."/>
            <person name="Zhu Z."/>
            <person name="Chan K.C."/>
            <person name="Issaq H.J."/>
            <person name="Dimitrov D.S."/>
            <person name="Veenstra T.D."/>
        </authorList>
    </citation>
    <scope>IDENTIFICATION BY MASS SPECTROMETRY [LARGE SCALE ANALYSIS]</scope>
    <source>
        <tissue>Cervix carcinoma</tissue>
    </source>
</reference>
<reference key="11">
    <citation type="journal article" date="2008" name="J. Proteome Res.">
        <title>Combining protein-based IMAC, peptide-based IMAC, and MudPIT for efficient phosphoproteomic analysis.</title>
        <authorList>
            <person name="Cantin G.T."/>
            <person name="Yi W."/>
            <person name="Lu B."/>
            <person name="Park S.K."/>
            <person name="Xu T."/>
            <person name="Lee J.-D."/>
            <person name="Yates J.R. III"/>
        </authorList>
    </citation>
    <scope>IDENTIFICATION BY MASS SPECTROMETRY [LARGE SCALE ANALYSIS]</scope>
    <source>
        <tissue>Cervix carcinoma</tissue>
    </source>
</reference>
<reference key="12">
    <citation type="journal article" date="2008" name="Mol. Cell">
        <title>Kinase-selective enrichment enables quantitative phosphoproteomics of the kinome across the cell cycle.</title>
        <authorList>
            <person name="Daub H."/>
            <person name="Olsen J.V."/>
            <person name="Bairlein M."/>
            <person name="Gnad F."/>
            <person name="Oppermann F.S."/>
            <person name="Korner R."/>
            <person name="Greff Z."/>
            <person name="Keri G."/>
            <person name="Stemmann O."/>
            <person name="Mann M."/>
        </authorList>
    </citation>
    <scope>PHOSPHORYLATION [LARGE SCALE ANALYSIS] AT SER-873 AND SER-1510</scope>
    <scope>IDENTIFICATION BY MASS SPECTROMETRY [LARGE SCALE ANALYSIS]</scope>
    <source>
        <tissue>Cervix carcinoma</tissue>
    </source>
</reference>
<reference key="13">
    <citation type="journal article" date="2008" name="Proc. Natl. Acad. Sci. U.S.A.">
        <title>A quantitative atlas of mitotic phosphorylation.</title>
        <authorList>
            <person name="Dephoure N."/>
            <person name="Zhou C."/>
            <person name="Villen J."/>
            <person name="Beausoleil S.A."/>
            <person name="Bakalarski C.E."/>
            <person name="Elledge S.J."/>
            <person name="Gygi S.P."/>
        </authorList>
    </citation>
    <scope>PHOSPHORYLATION [LARGE SCALE ANALYSIS] AT SER-246; SER-276; SER-709; SER-867; SER-873; SER-895; THR-913; SER-919; SER-926; THR-932; SER-988; SER-991; SER-995; SER-1026; SER-1044; THR-1048; SER-1423; SER-1563; SER-1586; SER-1593; SER-1595; SER-1597 AND SER-1601</scope>
    <scope>PHOSPHORYLATION [LARGE SCALE ANALYSIS] AT SER-342 AND SER-345 (ISOFORM 3)</scope>
    <scope>IDENTIFICATION BY MASS SPECTROMETRY [LARGE SCALE ANALYSIS]</scope>
    <source>
        <tissue>Cervix carcinoma</tissue>
    </source>
</reference>
<reference key="14">
    <citation type="journal article" date="2009" name="Sci. Signal.">
        <title>Quantitative phosphoproteomic analysis of T cell receptor signaling reveals system-wide modulation of protein-protein interactions.</title>
        <authorList>
            <person name="Mayya V."/>
            <person name="Lundgren D.H."/>
            <person name="Hwang S.-I."/>
            <person name="Rezaul K."/>
            <person name="Wu L."/>
            <person name="Eng J.K."/>
            <person name="Rodionov V."/>
            <person name="Han D.K."/>
        </authorList>
    </citation>
    <scope>PHOSPHORYLATION [LARGE SCALE ANALYSIS] AT TYR-185; SER-704; SER-805; THR-956; SER-960; SER-988; SER-1026; SER-1423 AND SER-1586</scope>
    <scope>IDENTIFICATION BY MASS SPECTROMETRY [LARGE SCALE ANALYSIS]</scope>
    <source>
        <tissue>Leukemic T-cell</tissue>
    </source>
</reference>
<reference key="15">
    <citation type="journal article" date="2010" name="Sci. Signal.">
        <title>Quantitative phosphoproteomics reveals widespread full phosphorylation site occupancy during mitosis.</title>
        <authorList>
            <person name="Olsen J.V."/>
            <person name="Vermeulen M."/>
            <person name="Santamaria A."/>
            <person name="Kumar C."/>
            <person name="Miller M.L."/>
            <person name="Jensen L.J."/>
            <person name="Gnad F."/>
            <person name="Cox J."/>
            <person name="Jensen T.S."/>
            <person name="Nigg E.A."/>
            <person name="Brunak S."/>
            <person name="Mann M."/>
        </authorList>
    </citation>
    <scope>PHOSPHORYLATION [LARGE SCALE ANALYSIS] AT SER-246; SER-276; SER-704; SER-805; SER-867; SER-895; THR-913; SER-919; SER-960; SER-988; SER-991; SER-994; SER-1026; SER-1032; THR-1048; SER-1177; SER-1304; SER-1307; SER-1510; SER-1516; SER-1593 AND SER-1601</scope>
    <scope>PHOSPHORYLATION [LARGE SCALE ANALYSIS] AT SER-342 AND SER-345 (ISOFORM 3)</scope>
    <scope>IDENTIFICATION BY MASS SPECTROMETRY [LARGE SCALE ANALYSIS]</scope>
    <source>
        <tissue>Cervix carcinoma</tissue>
    </source>
</reference>
<reference key="16">
    <citation type="journal article" date="2011" name="BMC Syst. Biol.">
        <title>Initial characterization of the human central proteome.</title>
        <authorList>
            <person name="Burkard T.R."/>
            <person name="Planyavsky M."/>
            <person name="Kaupe I."/>
            <person name="Breitwieser F.P."/>
            <person name="Buerckstuemmer T."/>
            <person name="Bennett K.L."/>
            <person name="Superti-Furga G."/>
            <person name="Colinge J."/>
        </authorList>
    </citation>
    <scope>IDENTIFICATION BY MASS SPECTROMETRY [LARGE SCALE ANALYSIS]</scope>
</reference>
<reference key="17">
    <citation type="journal article" date="2011" name="Sci. Signal.">
        <title>System-wide temporal characterization of the proteome and phosphoproteome of human embryonic stem cell differentiation.</title>
        <authorList>
            <person name="Rigbolt K.T."/>
            <person name="Prokhorova T.A."/>
            <person name="Akimov V."/>
            <person name="Henningsen J."/>
            <person name="Johansen P.T."/>
            <person name="Kratchmarova I."/>
            <person name="Kassem M."/>
            <person name="Mann M."/>
            <person name="Olsen J.V."/>
            <person name="Blagoev B."/>
        </authorList>
    </citation>
    <scope>PHOSPHORYLATION [LARGE SCALE ANALYSIS] AT SER-246; SER-704; SER-751; SER-805; THR-1048; SER-1423 AND SER-1510</scope>
    <scope>PHOSPHORYLATION [LARGE SCALE ANALYSIS] AT SER-342 (ISOFORM 3)</scope>
    <scope>IDENTIFICATION BY MASS SPECTROMETRY [LARGE SCALE ANALYSIS]</scope>
</reference>
<reference key="18">
    <citation type="journal article" date="2012" name="Proc. Natl. Acad. Sci. U.S.A.">
        <title>N-terminal acetylome analyses and functional insights of the N-terminal acetyltransferase NatB.</title>
        <authorList>
            <person name="Van Damme P."/>
            <person name="Lasa M."/>
            <person name="Polevoda B."/>
            <person name="Gazquez C."/>
            <person name="Elosegui-Artola A."/>
            <person name="Kim D.S."/>
            <person name="De Juan-Pardo E."/>
            <person name="Demeyer K."/>
            <person name="Hole K."/>
            <person name="Larrea E."/>
            <person name="Timmerman E."/>
            <person name="Prieto J."/>
            <person name="Arnesen T."/>
            <person name="Sherman F."/>
            <person name="Gevaert K."/>
            <person name="Aldabe R."/>
        </authorList>
    </citation>
    <scope>ACETYLATION [LARGE SCALE ANALYSIS] AT MET-1 (ISOFORM 5)</scope>
    <scope>IDENTIFICATION BY MASS SPECTROMETRY [LARGE SCALE ANALYSIS]</scope>
</reference>
<reference key="19">
    <citation type="journal article" date="2013" name="J. Proteome Res.">
        <title>Toward a comprehensive characterization of a human cancer cell phosphoproteome.</title>
        <authorList>
            <person name="Zhou H."/>
            <person name="Di Palma S."/>
            <person name="Preisinger C."/>
            <person name="Peng M."/>
            <person name="Polat A.N."/>
            <person name="Heck A.J."/>
            <person name="Mohammed S."/>
        </authorList>
    </citation>
    <scope>PHOSPHORYLATION [LARGE SCALE ANALYSIS] AT SER-246; SER-257; SER-276; SER-704; SER-706; SER-805; SER-895; THR-913; SER-919; THR-932; THR-956; SER-960; SER-988; SER-1026; THR-1048; SER-1423; SER-1454; SER-1493; SER-1510; SER-1516; SER-1563; SER-1586 AND SER-1593</scope>
    <scope>IDENTIFICATION BY MASS SPECTROMETRY [LARGE SCALE ANALYSIS]</scope>
    <source>
        <tissue>Cervix carcinoma</tissue>
        <tissue>Erythroleukemia</tissue>
    </source>
</reference>
<reference key="20">
    <citation type="journal article" date="2014" name="J. Proteomics">
        <title>An enzyme assisted RP-RPLC approach for in-depth analysis of human liver phosphoproteome.</title>
        <authorList>
            <person name="Bian Y."/>
            <person name="Song C."/>
            <person name="Cheng K."/>
            <person name="Dong M."/>
            <person name="Wang F."/>
            <person name="Huang J."/>
            <person name="Sun D."/>
            <person name="Wang L."/>
            <person name="Ye M."/>
            <person name="Zou H."/>
        </authorList>
    </citation>
    <scope>PHOSPHORYLATION [LARGE SCALE ANALYSIS] AT SER-342; SER-704; SER-867; SER-879; SER-988; SER-991; SER-1026; SER-1510; SER-1586 AND SER-1593</scope>
    <scope>IDENTIFICATION BY MASS SPECTROMETRY [LARGE SCALE ANALYSIS]</scope>
    <source>
        <tissue>Liver</tissue>
    </source>
</reference>
<reference key="21">
    <citation type="journal article" date="2017" name="Nat. Struct. Mol. Biol.">
        <title>Site-specific mapping of the human SUMO proteome reveals co-modification with phosphorylation.</title>
        <authorList>
            <person name="Hendriks I.A."/>
            <person name="Lyon D."/>
            <person name="Young C."/>
            <person name="Jensen L.J."/>
            <person name="Vertegaal A.C."/>
            <person name="Nielsen M.L."/>
        </authorList>
    </citation>
    <scope>SUMOYLATION [LARGE SCALE ANALYSIS] AT LYS-1405</scope>
    <scope>IDENTIFICATION BY MASS SPECTROMETRY [LARGE SCALE ANALYSIS]</scope>
</reference>
<reference key="22">
    <citation type="submission" date="2007-07" db="PDB data bank">
        <title>Crystal structure of PDZ domain of KIAA0858 (LIM), ms0793 from homo sapiens.</title>
        <authorList>
            <consortium name="RIKEN structural genomics initiative (RSGI)"/>
        </authorList>
    </citation>
    <scope>X-RAY CRYSTALLOGRAPHY (1.46 ANGSTROMS) OF 1037-1126</scope>
</reference>
<reference key="23">
    <citation type="journal article" date="2006" name="Science">
        <title>The consensus coding sequences of human breast and colorectal cancers.</title>
        <authorList>
            <person name="Sjoeblom T."/>
            <person name="Jones S."/>
            <person name="Wood L.D."/>
            <person name="Parsons D.W."/>
            <person name="Lin J."/>
            <person name="Barber T.D."/>
            <person name="Mandelker D."/>
            <person name="Leary R.J."/>
            <person name="Ptak J."/>
            <person name="Silliman N."/>
            <person name="Szabo S."/>
            <person name="Buckhaults P."/>
            <person name="Farrell C."/>
            <person name="Meeh P."/>
            <person name="Markowitz S.D."/>
            <person name="Willis J."/>
            <person name="Dawson D."/>
            <person name="Willson J.K.V."/>
            <person name="Gazdar A.F."/>
            <person name="Hartigan J."/>
            <person name="Wu L."/>
            <person name="Liu C."/>
            <person name="Parmigiani G."/>
            <person name="Park B.H."/>
            <person name="Bachman K.E."/>
            <person name="Papadopoulos N."/>
            <person name="Vogelstein B."/>
            <person name="Kinzler K.W."/>
            <person name="Velculescu V.E."/>
        </authorList>
    </citation>
    <scope>VARIANTS [LARGE SCALE ANALYSIS] ALA-354 AND MET-785</scope>
</reference>
<name>LMO7_HUMAN</name>
<comment type="interaction">
    <interactant intactId="EBI-350367">
        <id>Q8WWI1</id>
    </interactant>
    <interactant intactId="EBI-347088">
        <id>P63104</id>
        <label>YWHAZ</label>
    </interactant>
    <organismsDiffer>false</organismsDiffer>
    <experiments>2</experiments>
</comment>
<comment type="interaction">
    <interactant intactId="EBI-4400717">
        <id>Q8WWI1-3</id>
    </interactant>
    <interactant intactId="EBI-25412632">
        <id>Q6UXM1-1</id>
        <label>LRIG3</label>
    </interactant>
    <organismsDiffer>false</organismsDiffer>
    <experiments>3</experiments>
</comment>
<comment type="alternative products">
    <event type="alternative splicing"/>
    <isoform>
        <id>Q8WWI1-1</id>
        <name>1</name>
        <sequence type="displayed"/>
    </isoform>
    <isoform>
        <id>Q8WWI1-2</id>
        <name>2</name>
        <sequence type="described" ref="VSP_009719"/>
    </isoform>
    <isoform>
        <id>Q8WWI1-3</id>
        <name>3</name>
        <sequence type="described" ref="VSP_009718"/>
    </isoform>
    <isoform>
        <id>Q8WWI1-4</id>
        <name>4</name>
        <sequence type="described" ref="VSP_009720"/>
    </isoform>
    <isoform>
        <id>Q8WWI1-5</id>
        <name>5</name>
        <sequence type="described" ref="VSP_055683 VSP_055684 VSP_055685"/>
    </isoform>
</comment>
<comment type="tissue specificity">
    <text evidence="5 7">Widely expressed. Isoform 2 and isoform 4 are predominantly expressed in brain.</text>
</comment>
<comment type="sequence caution" evidence="13">
    <conflict type="erroneous initiation">
        <sequence resource="EMBL-CDS" id="AAC96299"/>
    </conflict>
    <text>Extended N-terminus.</text>
</comment>
<comment type="sequence caution" evidence="13">
    <conflict type="erroneous initiation">
        <sequence resource="EMBL-CDS" id="AAC96300"/>
    </conflict>
    <text>Extended N-terminus.</text>
</comment>
<comment type="sequence caution" evidence="13">
    <conflict type="frameshift">
        <sequence resource="EMBL-CDS" id="AAD33924"/>
    </conflict>
</comment>
<gene>
    <name type="primary">LMO7</name>
    <name type="synonym">FBX20</name>
    <name type="synonym">FBXO20</name>
    <name type="synonym">KIAA0858</name>
</gene>
<keyword id="KW-0002">3D-structure</keyword>
<keyword id="KW-0007">Acetylation</keyword>
<keyword id="KW-0025">Alternative splicing</keyword>
<keyword id="KW-1017">Isopeptide bond</keyword>
<keyword id="KW-0440">LIM domain</keyword>
<keyword id="KW-0479">Metal-binding</keyword>
<keyword id="KW-0597">Phosphoprotein</keyword>
<keyword id="KW-1267">Proteomics identification</keyword>
<keyword id="KW-1185">Reference proteome</keyword>
<keyword id="KW-0832">Ubl conjugation</keyword>
<keyword id="KW-0862">Zinc</keyword>
<proteinExistence type="evidence at protein level"/>
<sequence>MKKIRICHIFTFYSWMSYDVLFQRTELGALEIWRQLICAHVCICVGWLYLRDRVCSKKDIILRTEQNSGRTILIKAVTEKNFETKDFRASLENGVLLCDLINKLKPGVIKKINRLSTPIAGLDNINVFLKACEQIGLKEAQLFHPGDLQDLSNRVTVKQEETDRRVKNVLITLYWLGRKAQSNPYYNGPHLNLKAFENLLGQALTKALEDSSFLKRSGRDSGYGDIWCPERGEFLAPPRHHKREDSFESLDSLGSRSLTSCSSDITLRGGREGFESDTDSEFTFKMQDYNKDDMSYRRISAVEPKTALPFNRFLPNKSRQPSYVPAPLRKKKPDKHEDNRRSWASPVYTEADGTFSSNQRRIWGTNVENWPTVQGTSKSSCYLEEEKAKTRSIPNIVKDDLYVRKLSPVMPNPGNAFDQFLPKCWTPEDVNWKRIKRETYKPWYKEFQGFSQFLLLQALQTYSDDILSSETHTKIDPTSGPRLITRRKNLSYAPGYRRDDLEMAALDPDLENDDFFVRKTGVFHANPYVLRAFEDFRKFSEQDDSVERDIILQCREGELVLPDLEKDDMIVRRIPAQKKEVPLSGAPDRYHPVPFPEPWTLPPEIQAKFLCVFERTCPSKEKSNSCRILVPSYRQKKDDMLTRKIQSWKLGTTVPPISFTPGPCSEADLKRWEAIREASRLRHKKRLMVERLFQKIYGENGSKSMSDVSAEDVQNLRQLRYEEMQKIKSQLKEQDQKWQDDLAKWKDRRKSYTSDLQKKKEEREEIEKQALEKSKRSSKTFKEMLQDRESQNQKSTVPSRRRMYSFDDVLEEGKRPPTMTVSEASYQSERVEEKGATYPSEIPKEDSTTFAKREDRVTTEIQLPSQSPVEEQSPASLSSLRSRSTQMESTRVSASLPRSYRKTDTVRLTSVVTPRPFGSQTRGISSLPRSYTMDDAWKYNGDVEDIKRTPNNVVSTPAPSPDASQLASSLSSQKEVAATEEDVTRLPSPTSPFSSLSQDQAATSKATLSSTSGLDLMSESGEGEISPQREVSRSQDQFSDMRISINQTPGKSLDFGFTIKWDIPGIFVASVEAGSPAEFSQLQVDDEIIAINNTKFSYNDSKEWEEAMAKAQETGHLVMDVRRYGKAGSPETKWIDATSGIYNSEKSSNLSVTTDFSESLQSSNIESKEINGIHDESNAFESKASESISLKNLKRRSQFFEQGSSDSVVPDLPVPTISAPSRWVWDQEEERKRQERWQKEQDRLLQEKYQREQEKLREEWQRAKQEAERENSKYLDEELMVLSSNSMSLTTREPSLATWEATWSEGSKSSDREGTRAGEEERRQPQEEVVHEDQGKKPQDQLVIERERKWEQQLQEEQEQKRLQAEAEEQKRPAEEQKRQAEIERETSVRIYQYRRPVDSYDIPKTEEASSGFLPGDRNKSRSTTELDDYSTNKNGNNKYLDQIGNMTSSQRRSKKEQVPSGAELERQQILQEMRKRTPLHNDNSWIRQRSASVNKEPVSLPGIMRRGESLDNLDSPRSNSWRQPPWLNQPTGFYASSSVQDFSRPPPQLVSTSNRAYMRNPSSSVPPPSAGSVKTSTTGVATTQSPTPRSHSPSASQSGSQLRNRSVSGKRICSYCNNILGKGAAMIIESLGLCYHLHCFKCVACECDLGGSSSGAEVRIRNHQLYCNDCYLRFKSGRPTAM</sequence>
<protein>
    <recommendedName>
        <fullName>LIM domain only protein 7</fullName>
        <shortName>LMO-7</shortName>
    </recommendedName>
    <alternativeName>
        <fullName>F-box only protein 20</fullName>
    </alternativeName>
    <alternativeName>
        <fullName>LOMP</fullName>
    </alternativeName>
</protein>
<feature type="chain" id="PRO_0000075824" description="LIM domain only protein 7">
    <location>
        <begin position="1"/>
        <end position="1683"/>
    </location>
</feature>
<feature type="domain" description="Calponin-homology (CH)" evidence="1">
    <location>
        <begin position="64"/>
        <end position="181"/>
    </location>
</feature>
<feature type="domain" description="PDZ" evidence="3">
    <location>
        <begin position="1042"/>
        <end position="1128"/>
    </location>
</feature>
<feature type="domain" description="LIM zinc-binding" evidence="2">
    <location>
        <begin position="1612"/>
        <end position="1678"/>
    </location>
</feature>
<feature type="region of interest" description="Disordered" evidence="4">
    <location>
        <begin position="312"/>
        <end position="343"/>
    </location>
</feature>
<feature type="region of interest" description="Disordered" evidence="4">
    <location>
        <begin position="749"/>
        <end position="901"/>
    </location>
</feature>
<feature type="region of interest" description="Disordered" evidence="4">
    <location>
        <begin position="947"/>
        <end position="1037"/>
    </location>
</feature>
<feature type="region of interest" description="Disordered" evidence="4">
    <location>
        <begin position="1255"/>
        <end position="1604"/>
    </location>
</feature>
<feature type="compositionally biased region" description="Basic and acidic residues" evidence="4">
    <location>
        <begin position="749"/>
        <end position="791"/>
    </location>
</feature>
<feature type="compositionally biased region" description="Polar residues" evidence="4">
    <location>
        <begin position="819"/>
        <end position="828"/>
    </location>
</feature>
<feature type="compositionally biased region" description="Basic and acidic residues" evidence="4">
    <location>
        <begin position="842"/>
        <end position="858"/>
    </location>
</feature>
<feature type="compositionally biased region" description="Polar residues" evidence="4">
    <location>
        <begin position="859"/>
        <end position="875"/>
    </location>
</feature>
<feature type="compositionally biased region" description="Low complexity" evidence="4">
    <location>
        <begin position="961"/>
        <end position="973"/>
    </location>
</feature>
<feature type="compositionally biased region" description="Low complexity" evidence="4">
    <location>
        <begin position="986"/>
        <end position="1012"/>
    </location>
</feature>
<feature type="compositionally biased region" description="Basic and acidic residues" evidence="4">
    <location>
        <begin position="1255"/>
        <end position="1276"/>
    </location>
</feature>
<feature type="compositionally biased region" description="Polar residues" evidence="4">
    <location>
        <begin position="1282"/>
        <end position="1293"/>
    </location>
</feature>
<feature type="compositionally biased region" description="Basic and acidic residues" evidence="4">
    <location>
        <begin position="1308"/>
        <end position="1351"/>
    </location>
</feature>
<feature type="compositionally biased region" description="Basic and acidic residues" evidence="4">
    <location>
        <begin position="1358"/>
        <end position="1388"/>
    </location>
</feature>
<feature type="compositionally biased region" description="Basic and acidic residues" evidence="4">
    <location>
        <begin position="1396"/>
        <end position="1408"/>
    </location>
</feature>
<feature type="compositionally biased region" description="Polar residues" evidence="4">
    <location>
        <begin position="1430"/>
        <end position="1451"/>
    </location>
</feature>
<feature type="compositionally biased region" description="Polar residues" evidence="4">
    <location>
        <begin position="1481"/>
        <end position="1494"/>
    </location>
</feature>
<feature type="compositionally biased region" description="Polar residues" evidence="4">
    <location>
        <begin position="1516"/>
        <end position="1542"/>
    </location>
</feature>
<feature type="compositionally biased region" description="Polar residues" evidence="4">
    <location>
        <begin position="1573"/>
        <end position="1590"/>
    </location>
</feature>
<feature type="compositionally biased region" description="Low complexity" evidence="4">
    <location>
        <begin position="1591"/>
        <end position="1601"/>
    </location>
</feature>
<feature type="modified residue" description="Phosphotyrosine" evidence="18">
    <location>
        <position position="185"/>
    </location>
</feature>
<feature type="modified residue" description="Phosphoserine" evidence="15 16 19 20 22">
    <location>
        <position position="246"/>
    </location>
</feature>
<feature type="modified residue" description="Phosphoserine" evidence="22">
    <location>
        <position position="257"/>
    </location>
</feature>
<feature type="modified residue" description="Phosphoserine" evidence="16 19 22">
    <location>
        <position position="276"/>
    </location>
</feature>
<feature type="modified residue" description="Phosphoserine" evidence="23">
    <location>
        <position position="342"/>
    </location>
</feature>
<feature type="modified residue" description="Phosphoserine" evidence="18 19 20 22 23">
    <location>
        <position position="704"/>
    </location>
</feature>
<feature type="modified residue" description="Phosphoserine" evidence="22">
    <location>
        <position position="706"/>
    </location>
</feature>
<feature type="modified residue" description="Phosphoserine" evidence="16">
    <location>
        <position position="709"/>
    </location>
</feature>
<feature type="modified residue" description="Phosphoserine" evidence="20">
    <location>
        <position position="751"/>
    </location>
</feature>
<feature type="modified residue" description="Phosphoserine" evidence="18 19 20 22">
    <location>
        <position position="805"/>
    </location>
</feature>
<feature type="modified residue" description="Phosphoserine" evidence="14 16 19 23">
    <location>
        <position position="867"/>
    </location>
</feature>
<feature type="modified residue" description="Phosphoserine" evidence="16 17">
    <location>
        <position position="873"/>
    </location>
</feature>
<feature type="modified residue" description="Phosphoserine" evidence="23">
    <location>
        <position position="879"/>
    </location>
</feature>
<feature type="modified residue" description="Phosphoserine" evidence="16 19 22">
    <location>
        <position position="895"/>
    </location>
</feature>
<feature type="modified residue" description="Phosphothreonine" evidence="16 19 22">
    <location>
        <position position="913"/>
    </location>
</feature>
<feature type="modified residue" description="Phosphoserine" evidence="16 19 22">
    <location>
        <position position="919"/>
    </location>
</feature>
<feature type="modified residue" description="Phosphoserine" evidence="16">
    <location>
        <position position="926"/>
    </location>
</feature>
<feature type="modified residue" description="Phosphothreonine" evidence="16 22">
    <location>
        <position position="932"/>
    </location>
</feature>
<feature type="modified residue" description="Phosphothreonine" evidence="14">
    <location>
        <position position="949"/>
    </location>
</feature>
<feature type="modified residue" description="Phosphothreonine" evidence="18 22">
    <location>
        <position position="956"/>
    </location>
</feature>
<feature type="modified residue" description="Phosphoserine" evidence="18 19 22">
    <location>
        <position position="960"/>
    </location>
</feature>
<feature type="modified residue" description="Phosphoserine" evidence="16 18 19 22 23">
    <location>
        <position position="988"/>
    </location>
</feature>
<feature type="modified residue" description="Phosphoserine" evidence="16 19 23">
    <location>
        <position position="991"/>
    </location>
</feature>
<feature type="modified residue" description="Phosphoserine" evidence="19">
    <location>
        <position position="994"/>
    </location>
</feature>
<feature type="modified residue" description="Phosphoserine" evidence="16">
    <location>
        <position position="995"/>
    </location>
</feature>
<feature type="modified residue" description="Phosphoserine" evidence="15 16 18 19 22 23">
    <location>
        <position position="1026"/>
    </location>
</feature>
<feature type="modified residue" description="Phosphoserine" evidence="19">
    <location>
        <position position="1032"/>
    </location>
</feature>
<feature type="modified residue" description="Phosphoserine" evidence="16">
    <location>
        <position position="1044"/>
    </location>
</feature>
<feature type="modified residue" description="Phosphothreonine" evidence="14 16 19 20 22">
    <location>
        <position position="1048"/>
    </location>
</feature>
<feature type="modified residue" description="Phosphoserine" evidence="19">
    <location>
        <position position="1177"/>
    </location>
</feature>
<feature type="modified residue" description="Phosphoserine" evidence="19">
    <location>
        <position position="1304"/>
    </location>
</feature>
<feature type="modified residue" description="Phosphoserine" evidence="19">
    <location>
        <position position="1307"/>
    </location>
</feature>
<feature type="modified residue" description="Phosphoserine" evidence="16 18 20 22">
    <location>
        <position position="1423"/>
    </location>
</feature>
<feature type="modified residue" description="Phosphoserine" evidence="22">
    <location>
        <position position="1454"/>
    </location>
</feature>
<feature type="modified residue" description="Phosphoserine" evidence="22">
    <location>
        <position position="1493"/>
    </location>
</feature>
<feature type="modified residue" description="Phosphoserine" evidence="15 17 19 20 22 23">
    <location>
        <position position="1510"/>
    </location>
</feature>
<feature type="modified residue" description="Phosphoserine" evidence="19 22">
    <location>
        <position position="1516"/>
    </location>
</feature>
<feature type="modified residue" description="Phosphoserine" evidence="16 22">
    <location>
        <position position="1563"/>
    </location>
</feature>
<feature type="modified residue" description="Phosphoserine" evidence="14 16 18 22 23">
    <location>
        <position position="1586"/>
    </location>
</feature>
<feature type="modified residue" description="Phosphoserine" evidence="16 19 22 23">
    <location>
        <position position="1593"/>
    </location>
</feature>
<feature type="modified residue" description="Phosphoserine" evidence="16">
    <location>
        <position position="1595"/>
    </location>
</feature>
<feature type="modified residue" description="Phosphoserine" evidence="16">
    <location>
        <position position="1597"/>
    </location>
</feature>
<feature type="modified residue" description="Phosphoserine" evidence="16 19">
    <location>
        <position position="1601"/>
    </location>
</feature>
<feature type="cross-link" description="Glycyl lysine isopeptide (Lys-Gly) (interchain with G-Cter in SUMO2)" evidence="24">
    <location>
        <position position="1405"/>
    </location>
</feature>
<feature type="splice variant" id="VSP_055683" description="In isoform 5." evidence="8">
    <location>
        <begin position="1"/>
        <end position="285"/>
    </location>
</feature>
<feature type="splice variant" id="VSP_009718" description="In isoform 3." evidence="10 11">
    <location>
        <begin position="357"/>
        <end position="690"/>
    </location>
</feature>
<feature type="splice variant" id="VSP_009719" description="In isoform 2." evidence="9 12">
    <original>RSVSGKRICSYCNNILGKGAAMIIESLGLCYHLHCFKCVACECDLGGSSSGAEVRIRNHQLYCNDCYLRFKSGRPTAM</original>
    <variation>SVLPVSVTSEALPQELKSGSETTNCTATTAISDSNLDGQPPCDVSLHTKALLQIEEEVVAAHVDL</variation>
    <location>
        <begin position="1606"/>
        <end position="1683"/>
    </location>
</feature>
<feature type="splice variant" id="VSP_009720" description="In isoform 4." evidence="13">
    <original>RSVSGKRICSYCNNILGKGAAMIIESLGLCYHLHCFKCVACECDLGGSSSGAEVRIRNHQLYCNDCYLRFKSGRPTAM</original>
    <variation>SWTANRHVM</variation>
    <location>
        <begin position="1606"/>
        <end position="1683"/>
    </location>
</feature>
<feature type="splice variant" id="VSP_055684" description="In isoform 5." evidence="8">
    <original>RSVSGKRICSYCNNILGKGAAMIIESLGLCYHLHCFKCVACECDLGGSSSGAEVRIRNHQLYCND</original>
    <variation>SVLPVSVTSEALPQELKSGSETTNCTATTAISDSNLDGQPPCDVSLHTKALLQIEEEVVAAHVDL</variation>
    <location>
        <begin position="1606"/>
        <end position="1670"/>
    </location>
</feature>
<feature type="splice variant" id="VSP_055685" description="In isoform 5." evidence="8">
    <location>
        <begin position="1671"/>
        <end position="1683"/>
    </location>
</feature>
<feature type="sequence variant" id="VAR_036189" description="In a colorectal cancer sample; somatic mutation." evidence="6">
    <original>T</original>
    <variation>A</variation>
    <location>
        <position position="354"/>
    </location>
</feature>
<feature type="sequence variant" id="VAR_036190" description="In a colorectal cancer sample; somatic mutation." evidence="6">
    <original>L</original>
    <variation>M</variation>
    <location>
        <position position="785"/>
    </location>
</feature>
<feature type="sequence variant" id="VAR_056163" description="In dbSNP:rs7988661.">
    <original>P</original>
    <variation>Q</variation>
    <location>
        <position position="1547"/>
    </location>
</feature>
<feature type="sequence conflict" description="In Ref. 5; AAF04521." evidence="13" ref="5">
    <original>V</original>
    <variation>A</variation>
    <location>
        <position position="522"/>
    </location>
</feature>
<feature type="sequence conflict" description="In Ref. 5; AAF04521." evidence="13" ref="5">
    <original>F</original>
    <variation>L</variation>
    <location>
        <position position="613"/>
    </location>
</feature>
<feature type="sequence conflict" description="In Ref. 6; AAD33924." evidence="13" ref="6">
    <original>R</original>
    <variation>C</variation>
    <location>
        <position position="891"/>
    </location>
</feature>
<feature type="sequence conflict" description="In Ref. 1; AAL37480 and 6; AAD33924." evidence="13" ref="1 6">
    <original>V</original>
    <variation>I</variation>
    <location>
        <position position="943"/>
    </location>
</feature>
<feature type="sequence conflict" description="In Ref. 6; AAD33924/AAB86592." evidence="13" ref="6">
    <original>M</original>
    <variation>T</variation>
    <location>
        <position position="1447"/>
    </location>
</feature>
<feature type="strand" evidence="25">
    <location>
        <begin position="1038"/>
        <end position="1046"/>
    </location>
</feature>
<feature type="strand" evidence="25">
    <location>
        <begin position="1056"/>
        <end position="1062"/>
    </location>
</feature>
<feature type="strand" evidence="25">
    <location>
        <begin position="1065"/>
        <end position="1071"/>
    </location>
</feature>
<feature type="helix" evidence="25">
    <location>
        <begin position="1076"/>
        <end position="1079"/>
    </location>
</feature>
<feature type="strand" evidence="25">
    <location>
        <begin position="1087"/>
        <end position="1091"/>
    </location>
</feature>
<feature type="helix" evidence="25">
    <location>
        <begin position="1101"/>
        <end position="1114"/>
    </location>
</feature>
<feature type="strand" evidence="25">
    <location>
        <begin position="1116"/>
        <end position="1124"/>
    </location>
</feature>
<feature type="modified residue" description="Phosphoserine" evidence="14 16 19 20">
    <location sequence="Q8WWI1-3">
        <position position="342"/>
    </location>
</feature>
<feature type="modified residue" description="Phosphoserine" evidence="16 19">
    <location sequence="Q8WWI1-3">
        <position position="345"/>
    </location>
</feature>
<feature type="modified residue" description="N-acetylmethionine" evidence="21">
    <location sequence="Q8WWI1-5">
        <position position="1"/>
    </location>
</feature>